<dbReference type="EMBL" id="OP588905">
    <property type="protein sequence ID" value="WOZ48260.1"/>
    <property type="molecule type" value="mRNA"/>
</dbReference>
<accession>P0DRI5</accession>
<keyword id="KW-0044">Antibiotic</keyword>
<keyword id="KW-0929">Antimicrobial</keyword>
<keyword id="KW-0295">Fungicide</keyword>
<keyword id="KW-0391">Immunity</keyword>
<keyword id="KW-0399">Innate immunity</keyword>
<evidence type="ECO:0000269" key="1">
    <source>
    </source>
</evidence>
<evidence type="ECO:0000303" key="2">
    <source>
    </source>
</evidence>
<evidence type="ECO:0000305" key="3">
    <source>
    </source>
</evidence>
<sequence length="83" mass="9017">MRALYPESFKSKVAMYSGAWCGCRPRTRQLSGRLGRGTCGGRQPASRSADFSCECVLLLPLQDPSLLPQKLGLFAGTLVRLSP</sequence>
<feature type="chain" id="PRO_0000462191" description="Scyreptin" evidence="3">
    <location>
        <begin position="1"/>
        <end position="83"/>
    </location>
</feature>
<feature type="peptide" id="PRO_0000462192" description="Scyreptin(1-30)" evidence="3">
    <location>
        <begin position="1"/>
        <end position="30"/>
    </location>
</feature>
<organism>
    <name type="scientific">Scylla paramamosain</name>
    <name type="common">Mud crab</name>
    <dbReference type="NCBI Taxonomy" id="85552"/>
    <lineage>
        <taxon>Eukaryota</taxon>
        <taxon>Metazoa</taxon>
        <taxon>Ecdysozoa</taxon>
        <taxon>Arthropoda</taxon>
        <taxon>Crustacea</taxon>
        <taxon>Multicrustacea</taxon>
        <taxon>Malacostraca</taxon>
        <taxon>Eumalacostraca</taxon>
        <taxon>Eucarida</taxon>
        <taxon>Decapoda</taxon>
        <taxon>Pleocyemata</taxon>
        <taxon>Brachyura</taxon>
        <taxon>Eubrachyura</taxon>
        <taxon>Portunoidea</taxon>
        <taxon>Portunidae</taxon>
        <taxon>Portuninae</taxon>
        <taxon>Scylla</taxon>
    </lineage>
</organism>
<reference key="1">
    <citation type="journal article" date="2023" name="Biochem. Pharmacol.">
        <title>A novel antimicrobial peptide Scyreptin1-30 from Scylla paramamosain exhibiting potential therapy of Pseudomonas aeruginosa early infection in a mouse burn wound model.</title>
        <authorList>
            <person name="Zhang W."/>
            <person name="An Z."/>
            <person name="Bai Y."/>
            <person name="Zhou Y."/>
            <person name="Chen F."/>
            <person name="Wang K.J."/>
        </authorList>
    </citation>
    <scope>NUCLEOTIDE SEQUENCE [MRNA]</scope>
    <scope>FUNCTION OF SCYREPTIN(1-30)</scope>
    <scope>SYNTHESIS OF 1-30</scope>
    <scope>3D-STRUCTURE MODELING</scope>
</reference>
<name>AMP_SCYPA</name>
<proteinExistence type="predicted"/>
<comment type="function">
    <molecule>Scyreptin(1-30)</molecule>
    <text evidence="1">cationic antimicrobial peptide that exhibits a potent and broad-spectrum antimicrobial activity against both bacteria and fungi, as well as against the multidrug-resistant bacteria P.aeruginosa. Exhibits rapid bactericidal kinetic. Acts by destroying the integrity of bacterial membranes, leading to bacterial death. Also exhibits potent anti-biofilm activity against P.aeruginosa. Shows high thermal stability and ion tolerance, as it maintains antibacterial activity even when heated to 100 degrees Celsius for 30 minutes and in presence of high levels of NaCl, CaCl(2) and MgCl(2). Does not show cytotoxicity and hemolytic activity. In a mouse model of burn infection, exhibits a remarkably reduction in the bacterial load caused by multidrug-resistant P.aeruginosa at the site of infection, and promotes wound healing.</text>
</comment>
<protein>
    <recommendedName>
        <fullName evidence="2">Scyreptin</fullName>
    </recommendedName>
    <component>
        <recommendedName>
            <fullName evidence="2">Scyreptin(1-30)</fullName>
        </recommendedName>
    </component>
</protein>